<protein>
    <recommendedName>
        <fullName>ER membrane protein complex subunit 3</fullName>
    </recommendedName>
    <alternativeName>
        <fullName>Transmembrane protein 111</fullName>
    </alternativeName>
</protein>
<organism>
    <name type="scientific">Bos taurus</name>
    <name type="common">Bovine</name>
    <dbReference type="NCBI Taxonomy" id="9913"/>
    <lineage>
        <taxon>Eukaryota</taxon>
        <taxon>Metazoa</taxon>
        <taxon>Chordata</taxon>
        <taxon>Craniata</taxon>
        <taxon>Vertebrata</taxon>
        <taxon>Euteleostomi</taxon>
        <taxon>Mammalia</taxon>
        <taxon>Eutheria</taxon>
        <taxon>Laurasiatheria</taxon>
        <taxon>Artiodactyla</taxon>
        <taxon>Ruminantia</taxon>
        <taxon>Pecora</taxon>
        <taxon>Bovidae</taxon>
        <taxon>Bovinae</taxon>
        <taxon>Bos</taxon>
    </lineage>
</organism>
<accession>Q3ZCB8</accession>
<name>EMC3_BOVIN</name>
<comment type="function">
    <text evidence="1">Part of the endoplasmic reticulum membrane protein complex (EMC) that enables the energy-independent insertion into endoplasmic reticulum membranes of newly synthesized membrane proteins. Preferentially accommodates proteins with transmembrane domains that are weakly hydrophobic or contain destabilizing features such as charged and aromatic residues. Involved in the cotranslational insertion of multi-pass membrane proteins in which stop-transfer membrane-anchor sequences become ER membrane spanning helices. It is also required for the post-translational insertion of tail-anchored/TA proteins in endoplasmic reticulum membranes. By mediating the proper cotranslational insertion of N-terminal transmembrane domains in an N-exo topology, with translocated N-terminus in the lumen of the ER, controls the topology of multi-pass membrane proteins like the G protein-coupled receptors. By regulating the insertion of various proteins in membranes, it is indirectly involved in many cellular processes.</text>
</comment>
<comment type="subunit">
    <text evidence="1">Component of the ER membrane protein complex (EMC).</text>
</comment>
<comment type="subcellular location">
    <subcellularLocation>
        <location evidence="1">Endoplasmic reticulum membrane</location>
        <topology evidence="1">Multi-pass membrane protein</topology>
    </subcellularLocation>
</comment>
<comment type="similarity">
    <text evidence="2">Belongs to the EMC3 family.</text>
</comment>
<keyword id="KW-0256">Endoplasmic reticulum</keyword>
<keyword id="KW-0472">Membrane</keyword>
<keyword id="KW-1185">Reference proteome</keyword>
<keyword id="KW-0812">Transmembrane</keyword>
<keyword id="KW-1133">Transmembrane helix</keyword>
<evidence type="ECO:0000250" key="1">
    <source>
        <dbReference type="UniProtKB" id="Q9P0I2"/>
    </source>
</evidence>
<evidence type="ECO:0000305" key="2"/>
<proteinExistence type="evidence at transcript level"/>
<feature type="initiator methionine" description="Removed" evidence="1">
    <location>
        <position position="1"/>
    </location>
</feature>
<feature type="chain" id="PRO_0000249456" description="ER membrane protein complex subunit 3">
    <location>
        <begin position="2"/>
        <end position="261"/>
    </location>
</feature>
<feature type="topological domain" description="Lumenal" evidence="1">
    <location>
        <begin position="2"/>
        <end position="14"/>
    </location>
</feature>
<feature type="transmembrane region" description="Helical" evidence="1">
    <location>
        <begin position="15"/>
        <end position="38"/>
    </location>
</feature>
<feature type="topological domain" description="Cytoplasmic" evidence="1">
    <location>
        <begin position="39"/>
        <end position="114"/>
    </location>
</feature>
<feature type="transmembrane region" description="Helical" evidence="1">
    <location>
        <begin position="115"/>
        <end position="130"/>
    </location>
</feature>
<feature type="topological domain" description="Lumenal" evidence="1">
    <location>
        <begin position="131"/>
        <end position="168"/>
    </location>
</feature>
<feature type="transmembrane region" description="Helical" evidence="1">
    <location>
        <begin position="169"/>
        <end position="187"/>
    </location>
</feature>
<feature type="topological domain" description="Cytoplasmic" evidence="1">
    <location>
        <begin position="188"/>
        <end position="261"/>
    </location>
</feature>
<reference key="1">
    <citation type="submission" date="2005-08" db="EMBL/GenBank/DDBJ databases">
        <authorList>
            <consortium name="NIH - Mammalian Gene Collection (MGC) project"/>
        </authorList>
    </citation>
    <scope>NUCLEOTIDE SEQUENCE [LARGE SCALE MRNA]</scope>
    <source>
        <strain>Crossbred X Angus</strain>
        <tissue>Ileum</tissue>
    </source>
</reference>
<sequence>MAGPELLLDSNIRLWVVLPIVIITFFVGMIRHYVSILLQSDKKLTQEQVSDSQVLIRSRVLRENGKYIPKQSFLTRKYYFNNPEDGFFKKTKRKVVPPSPVTDPTMLTDMMKGNVTNVLPMILIGGWINMTFSGFVTTKVPFPLTLRFKPMLQQGIELLTLDASWVSSASWYFLNVFGLRSIYSLILGQDNAADQSRMMQEQMTGAAMAMPADTNKAFKTEWEALELTDHQWALDDVEEELMAKDLHFEGMFKKELQTSIF</sequence>
<gene>
    <name type="primary">EMC3</name>
    <name type="synonym">TMEM111</name>
</gene>
<dbReference type="EMBL" id="BC102575">
    <property type="protein sequence ID" value="AAI02576.1"/>
    <property type="molecule type" value="mRNA"/>
</dbReference>
<dbReference type="RefSeq" id="NP_001030228.1">
    <property type="nucleotide sequence ID" value="NM_001035056.1"/>
</dbReference>
<dbReference type="SMR" id="Q3ZCB8"/>
<dbReference type="FunCoup" id="Q3ZCB8">
    <property type="interactions" value="2929"/>
</dbReference>
<dbReference type="STRING" id="9913.ENSBTAP00000005064"/>
<dbReference type="PaxDb" id="9913-ENSBTAP00000005064"/>
<dbReference type="Ensembl" id="ENSBTAT00000005064.6">
    <property type="protein sequence ID" value="ENSBTAP00000005064.6"/>
    <property type="gene ID" value="ENSBTAG00000003882.6"/>
</dbReference>
<dbReference type="GeneID" id="508371"/>
<dbReference type="KEGG" id="bta:508371"/>
<dbReference type="CTD" id="55831"/>
<dbReference type="VEuPathDB" id="HostDB:ENSBTAG00000003882"/>
<dbReference type="VGNC" id="VGNC:28464">
    <property type="gene designation" value="EMC3"/>
</dbReference>
<dbReference type="eggNOG" id="KOG3188">
    <property type="taxonomic scope" value="Eukaryota"/>
</dbReference>
<dbReference type="GeneTree" id="ENSGT00390000005780"/>
<dbReference type="InParanoid" id="Q3ZCB8"/>
<dbReference type="OMA" id="DSINMID"/>
<dbReference type="OrthoDB" id="6745403at2759"/>
<dbReference type="Reactome" id="R-BTA-8980692">
    <property type="pathway name" value="RHOA GTPase cycle"/>
</dbReference>
<dbReference type="Proteomes" id="UP000009136">
    <property type="component" value="Chromosome 22"/>
</dbReference>
<dbReference type="Bgee" id="ENSBTAG00000003882">
    <property type="expression patterns" value="Expressed in semitendinosus and 104 other cell types or tissues"/>
</dbReference>
<dbReference type="GO" id="GO:0072546">
    <property type="term" value="C:EMC complex"/>
    <property type="evidence" value="ECO:0000250"/>
    <property type="project" value="UniProtKB"/>
</dbReference>
<dbReference type="GO" id="GO:0005789">
    <property type="term" value="C:endoplasmic reticulum membrane"/>
    <property type="evidence" value="ECO:0000250"/>
    <property type="project" value="UniProtKB"/>
</dbReference>
<dbReference type="GO" id="GO:0016020">
    <property type="term" value="C:membrane"/>
    <property type="evidence" value="ECO:0000250"/>
    <property type="project" value="UniProtKB"/>
</dbReference>
<dbReference type="GO" id="GO:0032977">
    <property type="term" value="F:membrane insertase activity"/>
    <property type="evidence" value="ECO:0007669"/>
    <property type="project" value="Ensembl"/>
</dbReference>
<dbReference type="GO" id="GO:0045050">
    <property type="term" value="P:protein insertion into ER membrane by stop-transfer membrane-anchor sequence"/>
    <property type="evidence" value="ECO:0000250"/>
    <property type="project" value="UniProtKB"/>
</dbReference>
<dbReference type="GO" id="GO:0071816">
    <property type="term" value="P:tail-anchored membrane protein insertion into ER membrane"/>
    <property type="evidence" value="ECO:0000250"/>
    <property type="project" value="UniProtKB"/>
</dbReference>
<dbReference type="InterPro" id="IPR008568">
    <property type="entry name" value="EMC3"/>
</dbReference>
<dbReference type="InterPro" id="IPR002809">
    <property type="entry name" value="EMC3/TMCO1"/>
</dbReference>
<dbReference type="PANTHER" id="PTHR13116">
    <property type="entry name" value="ER MEMBRANE PROTEIN COMPLEX SUBUNIT 3"/>
    <property type="match status" value="1"/>
</dbReference>
<dbReference type="PANTHER" id="PTHR13116:SF10">
    <property type="entry name" value="ER MEMBRANE PROTEIN COMPLEX SUBUNIT 3"/>
    <property type="match status" value="1"/>
</dbReference>
<dbReference type="Pfam" id="PF01956">
    <property type="entry name" value="EMC3_TMCO1"/>
    <property type="match status" value="1"/>
</dbReference>
<dbReference type="PIRSF" id="PIRSF010045">
    <property type="entry name" value="DUF850_TM_euk"/>
    <property type="match status" value="1"/>
</dbReference>
<dbReference type="SMART" id="SM01415">
    <property type="entry name" value="DUF106"/>
    <property type="match status" value="1"/>
</dbReference>